<reference key="1">
    <citation type="journal article" date="1998" name="Science">
        <title>Genome sequence of an obligate intracellular pathogen of humans: Chlamydia trachomatis.</title>
        <authorList>
            <person name="Stephens R.S."/>
            <person name="Kalman S."/>
            <person name="Lammel C.J."/>
            <person name="Fan J."/>
            <person name="Marathe R."/>
            <person name="Aravind L."/>
            <person name="Mitchell W.P."/>
            <person name="Olinger L."/>
            <person name="Tatusov R.L."/>
            <person name="Zhao Q."/>
            <person name="Koonin E.V."/>
            <person name="Davis R.W."/>
        </authorList>
    </citation>
    <scope>NUCLEOTIDE SEQUENCE [LARGE SCALE GENOMIC DNA]</scope>
    <source>
        <strain>ATCC VR-885 / DSM 19411 / UW-3/Cx</strain>
    </source>
</reference>
<organism>
    <name type="scientific">Chlamydia trachomatis serovar D (strain ATCC VR-885 / DSM 19411 / UW-3/Cx)</name>
    <dbReference type="NCBI Taxonomy" id="272561"/>
    <lineage>
        <taxon>Bacteria</taxon>
        <taxon>Pseudomonadati</taxon>
        <taxon>Chlamydiota</taxon>
        <taxon>Chlamydiia</taxon>
        <taxon>Chlamydiales</taxon>
        <taxon>Chlamydiaceae</taxon>
        <taxon>Chlamydia/Chlamydophila group</taxon>
        <taxon>Chlamydia</taxon>
    </lineage>
</organism>
<proteinExistence type="inferred from homology"/>
<accession>O84429</accession>
<feature type="chain" id="PRO_0000102438" description="Endoribonuclease YbeY">
    <location>
        <begin position="1"/>
        <end position="161"/>
    </location>
</feature>
<feature type="binding site" evidence="1">
    <location>
        <position position="120"/>
    </location>
    <ligand>
        <name>Zn(2+)</name>
        <dbReference type="ChEBI" id="CHEBI:29105"/>
        <note>catalytic</note>
    </ligand>
</feature>
<feature type="binding site" evidence="1">
    <location>
        <position position="124"/>
    </location>
    <ligand>
        <name>Zn(2+)</name>
        <dbReference type="ChEBI" id="CHEBI:29105"/>
        <note>catalytic</note>
    </ligand>
</feature>
<feature type="binding site" evidence="1">
    <location>
        <position position="130"/>
    </location>
    <ligand>
        <name>Zn(2+)</name>
        <dbReference type="ChEBI" id="CHEBI:29105"/>
        <note>catalytic</note>
    </ligand>
</feature>
<protein>
    <recommendedName>
        <fullName evidence="1">Endoribonuclease YbeY</fullName>
        <ecNumber evidence="1">3.1.-.-</ecNumber>
    </recommendedName>
</protein>
<gene>
    <name evidence="1" type="primary">ybeY</name>
    <name type="ordered locus">CT_422</name>
</gene>
<sequence length="161" mass="18440">MLILDRSSPQIFISNEQQDVSIDLQSAQRLVVLFLELQKVSTDQVYVYFLDDTALAQLHDEQFSDPSPTDTITLPIDKPGIASFPHVLGEAFVSPKAAMRFLEQYTEDQLYHEISRYVVHSLLHMLGYDDQTDEDKRIMQEQEDVSLSFLAEHQALLRPAV</sequence>
<comment type="function">
    <text evidence="1">Single strand-specific metallo-endoribonuclease involved in late-stage 70S ribosome quality control and in maturation of the 3' terminus of the 16S rRNA.</text>
</comment>
<comment type="cofactor">
    <cofactor evidence="1">
        <name>Zn(2+)</name>
        <dbReference type="ChEBI" id="CHEBI:29105"/>
    </cofactor>
    <text evidence="1">Binds 1 zinc ion.</text>
</comment>
<comment type="subcellular location">
    <subcellularLocation>
        <location evidence="1">Cytoplasm</location>
    </subcellularLocation>
</comment>
<comment type="similarity">
    <text evidence="1">Belongs to the endoribonuclease YbeY family.</text>
</comment>
<evidence type="ECO:0000255" key="1">
    <source>
        <dbReference type="HAMAP-Rule" id="MF_00009"/>
    </source>
</evidence>
<name>YBEY_CHLTR</name>
<dbReference type="EC" id="3.1.-.-" evidence="1"/>
<dbReference type="EMBL" id="AE001273">
    <property type="protein sequence ID" value="AAC68019.1"/>
    <property type="molecule type" value="Genomic_DNA"/>
</dbReference>
<dbReference type="PIR" id="F71515">
    <property type="entry name" value="F71515"/>
</dbReference>
<dbReference type="RefSeq" id="NP_219934.1">
    <property type="nucleotide sequence ID" value="NC_000117.1"/>
</dbReference>
<dbReference type="RefSeq" id="WP_009871776.1">
    <property type="nucleotide sequence ID" value="NC_000117.1"/>
</dbReference>
<dbReference type="SMR" id="O84429"/>
<dbReference type="STRING" id="272561.CT_422"/>
<dbReference type="EnsemblBacteria" id="AAC68019">
    <property type="protein sequence ID" value="AAC68019"/>
    <property type="gene ID" value="CT_422"/>
</dbReference>
<dbReference type="GeneID" id="884690"/>
<dbReference type="KEGG" id="ctr:CT_422"/>
<dbReference type="PATRIC" id="fig|272561.5.peg.456"/>
<dbReference type="HOGENOM" id="CLU_106710_2_0_0"/>
<dbReference type="InParanoid" id="O84429"/>
<dbReference type="OrthoDB" id="9807740at2"/>
<dbReference type="Proteomes" id="UP000000431">
    <property type="component" value="Chromosome"/>
</dbReference>
<dbReference type="GO" id="GO:0005737">
    <property type="term" value="C:cytoplasm"/>
    <property type="evidence" value="ECO:0007669"/>
    <property type="project" value="UniProtKB-SubCell"/>
</dbReference>
<dbReference type="GO" id="GO:0004222">
    <property type="term" value="F:metalloendopeptidase activity"/>
    <property type="evidence" value="ECO:0007669"/>
    <property type="project" value="InterPro"/>
</dbReference>
<dbReference type="GO" id="GO:0004521">
    <property type="term" value="F:RNA endonuclease activity"/>
    <property type="evidence" value="ECO:0007669"/>
    <property type="project" value="UniProtKB-UniRule"/>
</dbReference>
<dbReference type="GO" id="GO:0008270">
    <property type="term" value="F:zinc ion binding"/>
    <property type="evidence" value="ECO:0007669"/>
    <property type="project" value="UniProtKB-UniRule"/>
</dbReference>
<dbReference type="GO" id="GO:0006364">
    <property type="term" value="P:rRNA processing"/>
    <property type="evidence" value="ECO:0007669"/>
    <property type="project" value="UniProtKB-UniRule"/>
</dbReference>
<dbReference type="Gene3D" id="3.40.390.30">
    <property type="entry name" value="Metalloproteases ('zincins'), catalytic domain"/>
    <property type="match status" value="1"/>
</dbReference>
<dbReference type="HAMAP" id="MF_00009">
    <property type="entry name" value="Endoribonucl_YbeY"/>
    <property type="match status" value="1"/>
</dbReference>
<dbReference type="InterPro" id="IPR023091">
    <property type="entry name" value="MetalPrtase_cat_dom_sf_prd"/>
</dbReference>
<dbReference type="InterPro" id="IPR002036">
    <property type="entry name" value="YbeY"/>
</dbReference>
<dbReference type="NCBIfam" id="TIGR00043">
    <property type="entry name" value="rRNA maturation RNase YbeY"/>
    <property type="match status" value="1"/>
</dbReference>
<dbReference type="Pfam" id="PF02130">
    <property type="entry name" value="YbeY"/>
    <property type="match status" value="1"/>
</dbReference>
<dbReference type="SUPFAM" id="SSF55486">
    <property type="entry name" value="Metalloproteases ('zincins'), catalytic domain"/>
    <property type="match status" value="1"/>
</dbReference>
<keyword id="KW-0963">Cytoplasm</keyword>
<keyword id="KW-0255">Endonuclease</keyword>
<keyword id="KW-0378">Hydrolase</keyword>
<keyword id="KW-0479">Metal-binding</keyword>
<keyword id="KW-0540">Nuclease</keyword>
<keyword id="KW-1185">Reference proteome</keyword>
<keyword id="KW-0690">Ribosome biogenesis</keyword>
<keyword id="KW-0698">rRNA processing</keyword>
<keyword id="KW-0862">Zinc</keyword>